<organism>
    <name type="scientific">Arabidopsis thaliana</name>
    <name type="common">Mouse-ear cress</name>
    <dbReference type="NCBI Taxonomy" id="3702"/>
    <lineage>
        <taxon>Eukaryota</taxon>
        <taxon>Viridiplantae</taxon>
        <taxon>Streptophyta</taxon>
        <taxon>Embryophyta</taxon>
        <taxon>Tracheophyta</taxon>
        <taxon>Spermatophyta</taxon>
        <taxon>Magnoliopsida</taxon>
        <taxon>eudicotyledons</taxon>
        <taxon>Gunneridae</taxon>
        <taxon>Pentapetalae</taxon>
        <taxon>rosids</taxon>
        <taxon>malvids</taxon>
        <taxon>Brassicales</taxon>
        <taxon>Brassicaceae</taxon>
        <taxon>Camelineae</taxon>
        <taxon>Arabidopsis</taxon>
    </lineage>
</organism>
<gene>
    <name type="primary">CRRSP50</name>
    <name type="ordered locus">At4g20570</name>
    <name type="ORF">F9F13.220</name>
</gene>
<name>CRR50_ARATH</name>
<keyword id="KW-1185">Reference proteome</keyword>
<keyword id="KW-0677">Repeat</keyword>
<keyword id="KW-0964">Secreted</keyword>
<keyword id="KW-0732">Signal</keyword>
<reference key="1">
    <citation type="journal article" date="1999" name="Nature">
        <title>Sequence and analysis of chromosome 4 of the plant Arabidopsis thaliana.</title>
        <authorList>
            <person name="Mayer K.F.X."/>
            <person name="Schueller C."/>
            <person name="Wambutt R."/>
            <person name="Murphy G."/>
            <person name="Volckaert G."/>
            <person name="Pohl T."/>
            <person name="Duesterhoeft A."/>
            <person name="Stiekema W."/>
            <person name="Entian K.-D."/>
            <person name="Terryn N."/>
            <person name="Harris B."/>
            <person name="Ansorge W."/>
            <person name="Brandt P."/>
            <person name="Grivell L.A."/>
            <person name="Rieger M."/>
            <person name="Weichselgartner M."/>
            <person name="de Simone V."/>
            <person name="Obermaier B."/>
            <person name="Mache R."/>
            <person name="Mueller M."/>
            <person name="Kreis M."/>
            <person name="Delseny M."/>
            <person name="Puigdomenech P."/>
            <person name="Watson M."/>
            <person name="Schmidtheini T."/>
            <person name="Reichert B."/>
            <person name="Portetelle D."/>
            <person name="Perez-Alonso M."/>
            <person name="Boutry M."/>
            <person name="Bancroft I."/>
            <person name="Vos P."/>
            <person name="Hoheisel J."/>
            <person name="Zimmermann W."/>
            <person name="Wedler H."/>
            <person name="Ridley P."/>
            <person name="Langham S.-A."/>
            <person name="McCullagh B."/>
            <person name="Bilham L."/>
            <person name="Robben J."/>
            <person name="van der Schueren J."/>
            <person name="Grymonprez B."/>
            <person name="Chuang Y.-J."/>
            <person name="Vandenbussche F."/>
            <person name="Braeken M."/>
            <person name="Weltjens I."/>
            <person name="Voet M."/>
            <person name="Bastiaens I."/>
            <person name="Aert R."/>
            <person name="Defoor E."/>
            <person name="Weitzenegger T."/>
            <person name="Bothe G."/>
            <person name="Ramsperger U."/>
            <person name="Hilbert H."/>
            <person name="Braun M."/>
            <person name="Holzer E."/>
            <person name="Brandt A."/>
            <person name="Peters S."/>
            <person name="van Staveren M."/>
            <person name="Dirkse W."/>
            <person name="Mooijman P."/>
            <person name="Klein Lankhorst R."/>
            <person name="Rose M."/>
            <person name="Hauf J."/>
            <person name="Koetter P."/>
            <person name="Berneiser S."/>
            <person name="Hempel S."/>
            <person name="Feldpausch M."/>
            <person name="Lamberth S."/>
            <person name="Van den Daele H."/>
            <person name="De Keyser A."/>
            <person name="Buysshaert C."/>
            <person name="Gielen J."/>
            <person name="Villarroel R."/>
            <person name="De Clercq R."/>
            <person name="van Montagu M."/>
            <person name="Rogers J."/>
            <person name="Cronin A."/>
            <person name="Quail M.A."/>
            <person name="Bray-Allen S."/>
            <person name="Clark L."/>
            <person name="Doggett J."/>
            <person name="Hall S."/>
            <person name="Kay M."/>
            <person name="Lennard N."/>
            <person name="McLay K."/>
            <person name="Mayes R."/>
            <person name="Pettett A."/>
            <person name="Rajandream M.A."/>
            <person name="Lyne M."/>
            <person name="Benes V."/>
            <person name="Rechmann S."/>
            <person name="Borkova D."/>
            <person name="Bloecker H."/>
            <person name="Scharfe M."/>
            <person name="Grimm M."/>
            <person name="Loehnert T.-H."/>
            <person name="Dose S."/>
            <person name="de Haan M."/>
            <person name="Maarse A.C."/>
            <person name="Schaefer M."/>
            <person name="Mueller-Auer S."/>
            <person name="Gabel C."/>
            <person name="Fuchs M."/>
            <person name="Fartmann B."/>
            <person name="Granderath K."/>
            <person name="Dauner D."/>
            <person name="Herzl A."/>
            <person name="Neumann S."/>
            <person name="Argiriou A."/>
            <person name="Vitale D."/>
            <person name="Liguori R."/>
            <person name="Piravandi E."/>
            <person name="Massenet O."/>
            <person name="Quigley F."/>
            <person name="Clabauld G."/>
            <person name="Muendlein A."/>
            <person name="Felber R."/>
            <person name="Schnabl S."/>
            <person name="Hiller R."/>
            <person name="Schmidt W."/>
            <person name="Lecharny A."/>
            <person name="Aubourg S."/>
            <person name="Chefdor F."/>
            <person name="Cooke R."/>
            <person name="Berger C."/>
            <person name="Monfort A."/>
            <person name="Casacuberta E."/>
            <person name="Gibbons T."/>
            <person name="Weber N."/>
            <person name="Vandenbol M."/>
            <person name="Bargues M."/>
            <person name="Terol J."/>
            <person name="Torres A."/>
            <person name="Perez-Perez A."/>
            <person name="Purnelle B."/>
            <person name="Bent E."/>
            <person name="Johnson S."/>
            <person name="Tacon D."/>
            <person name="Jesse T."/>
            <person name="Heijnen L."/>
            <person name="Schwarz S."/>
            <person name="Scholler P."/>
            <person name="Heber S."/>
            <person name="Francs P."/>
            <person name="Bielke C."/>
            <person name="Frishman D."/>
            <person name="Haase D."/>
            <person name="Lemcke K."/>
            <person name="Mewes H.-W."/>
            <person name="Stocker S."/>
            <person name="Zaccaria P."/>
            <person name="Bevan M."/>
            <person name="Wilson R.K."/>
            <person name="de la Bastide M."/>
            <person name="Habermann K."/>
            <person name="Parnell L."/>
            <person name="Dedhia N."/>
            <person name="Gnoj L."/>
            <person name="Schutz K."/>
            <person name="Huang E."/>
            <person name="Spiegel L."/>
            <person name="Sekhon M."/>
            <person name="Murray J."/>
            <person name="Sheet P."/>
            <person name="Cordes M."/>
            <person name="Abu-Threideh J."/>
            <person name="Stoneking T."/>
            <person name="Kalicki J."/>
            <person name="Graves T."/>
            <person name="Harmon G."/>
            <person name="Edwards J."/>
            <person name="Latreille P."/>
            <person name="Courtney L."/>
            <person name="Cloud J."/>
            <person name="Abbott A."/>
            <person name="Scott K."/>
            <person name="Johnson D."/>
            <person name="Minx P."/>
            <person name="Bentley D."/>
            <person name="Fulton B."/>
            <person name="Miller N."/>
            <person name="Greco T."/>
            <person name="Kemp K."/>
            <person name="Kramer J."/>
            <person name="Fulton L."/>
            <person name="Mardis E."/>
            <person name="Dante M."/>
            <person name="Pepin K."/>
            <person name="Hillier L.W."/>
            <person name="Nelson J."/>
            <person name="Spieth J."/>
            <person name="Ryan E."/>
            <person name="Andrews S."/>
            <person name="Geisel C."/>
            <person name="Layman D."/>
            <person name="Du H."/>
            <person name="Ali J."/>
            <person name="Berghoff A."/>
            <person name="Jones K."/>
            <person name="Drone K."/>
            <person name="Cotton M."/>
            <person name="Joshu C."/>
            <person name="Antonoiu B."/>
            <person name="Zidanic M."/>
            <person name="Strong C."/>
            <person name="Sun H."/>
            <person name="Lamar B."/>
            <person name="Yordan C."/>
            <person name="Ma P."/>
            <person name="Zhong J."/>
            <person name="Preston R."/>
            <person name="Vil D."/>
            <person name="Shekher M."/>
            <person name="Matero A."/>
            <person name="Shah R."/>
            <person name="Swaby I.K."/>
            <person name="O'Shaughnessy A."/>
            <person name="Rodriguez M."/>
            <person name="Hoffman J."/>
            <person name="Till S."/>
            <person name="Granat S."/>
            <person name="Shohdy N."/>
            <person name="Hasegawa A."/>
            <person name="Hameed A."/>
            <person name="Lodhi M."/>
            <person name="Johnson A."/>
            <person name="Chen E."/>
            <person name="Marra M.A."/>
            <person name="Martienssen R."/>
            <person name="McCombie W.R."/>
        </authorList>
    </citation>
    <scope>NUCLEOTIDE SEQUENCE [LARGE SCALE GENOMIC DNA]</scope>
    <source>
        <strain>cv. Columbia</strain>
    </source>
</reference>
<reference key="2">
    <citation type="journal article" date="2017" name="Plant J.">
        <title>Araport11: a complete reannotation of the Arabidopsis thaliana reference genome.</title>
        <authorList>
            <person name="Cheng C.Y."/>
            <person name="Krishnakumar V."/>
            <person name="Chan A.P."/>
            <person name="Thibaud-Nissen F."/>
            <person name="Schobel S."/>
            <person name="Town C.D."/>
        </authorList>
    </citation>
    <scope>GENOME REANNOTATION</scope>
    <source>
        <strain>cv. Columbia</strain>
    </source>
</reference>
<reference key="3">
    <citation type="journal article" date="2001" name="Plant Physiol.">
        <title>A superfamily of proteins with novel cysteine-rich repeats.</title>
        <authorList>
            <person name="Chen Z."/>
        </authorList>
    </citation>
    <scope>GENE FAMILY ORGANIZATION</scope>
    <scope>NOMENCLATURE</scope>
</reference>
<accession>P0CJ57</accession>
<accession>F4JVK9</accession>
<accession>Q680R8</accession>
<accession>Q9S7J6</accession>
<accession>Q9SUM6</accession>
<feature type="signal peptide" evidence="1">
    <location>
        <begin position="1"/>
        <end position="26"/>
    </location>
</feature>
<feature type="chain" id="PRO_0000403946" description="Cysteine-rich repeat secretory protein 50">
    <location>
        <begin position="27"/>
        <end position="256"/>
    </location>
</feature>
<feature type="domain" description="Gnk2-homologous 1" evidence="2">
    <location>
        <begin position="33"/>
        <end position="136"/>
    </location>
</feature>
<feature type="domain" description="Gnk2-homologous 2" evidence="2">
    <location>
        <begin position="142"/>
        <end position="253"/>
    </location>
</feature>
<sequence length="256" mass="29018">MSSVFGSVHILAMIAIQLLLTHSVSSLNLTNAYLHHKCSNTQGKYKQGSAFEKNLNLVLSTITSIGNFRDGFRYTEEGEDPNNVFVMFQCRGDSYWSKCPPCISTAVSGLRRRCPRNKGAIIWYDQCLLKISSVASFNKIDYENDFYLSNPNNMSDRGLFNKETSALLEKLAYKASDRNNLDGKQLVLYAAGEKRIGTKKVYAMVQCTKDLIFTKCFECLEGILRKFPQCCDGKRGGRVFGTSCNFRYELYPFLRN</sequence>
<dbReference type="EMBL" id="AL080253">
    <property type="protein sequence ID" value="CAB45823.1"/>
    <property type="status" value="ALT_SEQ"/>
    <property type="molecule type" value="Genomic_DNA"/>
</dbReference>
<dbReference type="EMBL" id="AL161553">
    <property type="protein sequence ID" value="CAB79057.1"/>
    <property type="status" value="ALT_SEQ"/>
    <property type="molecule type" value="Genomic_DNA"/>
</dbReference>
<dbReference type="EMBL" id="CP002687">
    <property type="status" value="NOT_ANNOTATED_CDS"/>
    <property type="molecule type" value="Genomic_DNA"/>
</dbReference>
<dbReference type="PIR" id="T10595">
    <property type="entry name" value="T10595"/>
</dbReference>
<dbReference type="RefSeq" id="NP_001320013.1">
    <property type="nucleotide sequence ID" value="NM_001341449.1"/>
</dbReference>
<dbReference type="RefSeq" id="NP_567608.3">
    <property type="nucleotide sequence ID" value="NM_118177.3"/>
</dbReference>
<dbReference type="RefSeq" id="NP_567609.3">
    <property type="nucleotide sequence ID" value="NM_118178.3"/>
</dbReference>
<dbReference type="RefSeq" id="NP_567610.3">
    <property type="nucleotide sequence ID" value="NM_118179.3"/>
</dbReference>
<dbReference type="RefSeq" id="NP_567611.3">
    <property type="nucleotide sequence ID" value="NM_118180.3"/>
</dbReference>
<dbReference type="RefSeq" id="NP_567612.3">
    <property type="nucleotide sequence ID" value="NM_118181.3"/>
</dbReference>
<dbReference type="RefSeq" id="NP_567614.3">
    <property type="nucleotide sequence ID" value="NM_118183.3"/>
</dbReference>
<dbReference type="SMR" id="P0CJ57"/>
<dbReference type="EnsemblPlants" id="AT4G20580.1">
    <property type="protein sequence ID" value="AT4G20580.1"/>
    <property type="gene ID" value="AT4G20580"/>
</dbReference>
<dbReference type="EnsemblPlants" id="AT4G20590.1">
    <property type="protein sequence ID" value="AT4G20590.1"/>
    <property type="gene ID" value="AT4G20590"/>
</dbReference>
<dbReference type="EnsemblPlants" id="AT4G20600.1">
    <property type="protein sequence ID" value="AT4G20600.1"/>
    <property type="gene ID" value="AT4G20600"/>
</dbReference>
<dbReference type="EnsemblPlants" id="AT4G20610.1">
    <property type="protein sequence ID" value="AT4G20610.1"/>
    <property type="gene ID" value="AT4G20610"/>
</dbReference>
<dbReference type="EnsemblPlants" id="AT4G20620.1">
    <property type="protein sequence ID" value="AT4G20620.1"/>
    <property type="gene ID" value="AT4G20620"/>
</dbReference>
<dbReference type="EnsemblPlants" id="AT4G20630.1">
    <property type="protein sequence ID" value="AT4G20630.1"/>
    <property type="gene ID" value="AT4G20630"/>
</dbReference>
<dbReference type="EnsemblPlants" id="AT4G20640.1">
    <property type="protein sequence ID" value="AT4G20640.1"/>
    <property type="gene ID" value="AT4G20640"/>
</dbReference>
<dbReference type="Gramene" id="AT4G20580.1">
    <property type="protein sequence ID" value="AT4G20580.1"/>
    <property type="gene ID" value="AT4G20580"/>
</dbReference>
<dbReference type="Gramene" id="AT4G20590.1">
    <property type="protein sequence ID" value="AT4G20590.1"/>
    <property type="gene ID" value="AT4G20590"/>
</dbReference>
<dbReference type="Gramene" id="AT4G20600.1">
    <property type="protein sequence ID" value="AT4G20600.1"/>
    <property type="gene ID" value="AT4G20600"/>
</dbReference>
<dbReference type="Gramene" id="AT4G20610.1">
    <property type="protein sequence ID" value="AT4G20610.1"/>
    <property type="gene ID" value="AT4G20610"/>
</dbReference>
<dbReference type="Gramene" id="AT4G20620.1">
    <property type="protein sequence ID" value="AT4G20620.1"/>
    <property type="gene ID" value="AT4G20620"/>
</dbReference>
<dbReference type="Gramene" id="AT4G20630.1">
    <property type="protein sequence ID" value="AT4G20630.1"/>
    <property type="gene ID" value="AT4G20630"/>
</dbReference>
<dbReference type="Gramene" id="AT4G20640.1">
    <property type="protein sequence ID" value="AT4G20640.1"/>
    <property type="gene ID" value="AT4G20640"/>
</dbReference>
<dbReference type="KEGG" id="ath:AT4G20580"/>
<dbReference type="KEGG" id="ath:AT4G20590"/>
<dbReference type="KEGG" id="ath:AT4G20600"/>
<dbReference type="KEGG" id="ath:AT4G20610"/>
<dbReference type="KEGG" id="ath:AT4G20620"/>
<dbReference type="KEGG" id="ath:AT4G20630"/>
<dbReference type="KEGG" id="ath:AT4G20640"/>
<dbReference type="Araport" id="AT4G20570"/>
<dbReference type="TAIR" id="AT4G20570"/>
<dbReference type="HOGENOM" id="CLU_000288_35_0_1"/>
<dbReference type="InParanoid" id="P0CJ57"/>
<dbReference type="OMA" id="FIQVWNI"/>
<dbReference type="PRO" id="PR:P0CJ57"/>
<dbReference type="Proteomes" id="UP000006548">
    <property type="component" value="Chromosome 4"/>
</dbReference>
<dbReference type="ExpressionAtlas" id="P0CJ57">
    <property type="expression patterns" value="baseline"/>
</dbReference>
<dbReference type="GO" id="GO:0005576">
    <property type="term" value="C:extracellular region"/>
    <property type="evidence" value="ECO:0007669"/>
    <property type="project" value="UniProtKB-SubCell"/>
</dbReference>
<dbReference type="CDD" id="cd23509">
    <property type="entry name" value="Gnk2-like"/>
    <property type="match status" value="2"/>
</dbReference>
<dbReference type="FunFam" id="3.30.430.20:FF:000002">
    <property type="entry name" value="Cysteine-rich receptor-like protein kinase 10"/>
    <property type="match status" value="1"/>
</dbReference>
<dbReference type="Gene3D" id="3.30.430.20">
    <property type="entry name" value="Gnk2 domain, C-X8-C-X2-C motif"/>
    <property type="match status" value="2"/>
</dbReference>
<dbReference type="InterPro" id="IPR050581">
    <property type="entry name" value="CRR_secretory_protein"/>
</dbReference>
<dbReference type="InterPro" id="IPR002902">
    <property type="entry name" value="GNK2"/>
</dbReference>
<dbReference type="InterPro" id="IPR038408">
    <property type="entry name" value="GNK2_sf"/>
</dbReference>
<dbReference type="PANTHER" id="PTHR32411:SF54">
    <property type="entry name" value="CYSTEINE-RICH REPEAT SECRETORY PROTEIN 29-RELATED"/>
    <property type="match status" value="1"/>
</dbReference>
<dbReference type="PANTHER" id="PTHR32411">
    <property type="entry name" value="CYSTEINE-RICH REPEAT SECRETORY PROTEIN 38-RELATED"/>
    <property type="match status" value="1"/>
</dbReference>
<dbReference type="Pfam" id="PF01657">
    <property type="entry name" value="Stress-antifung"/>
    <property type="match status" value="2"/>
</dbReference>
<dbReference type="PROSITE" id="PS51473">
    <property type="entry name" value="GNK2"/>
    <property type="match status" value="2"/>
</dbReference>
<comment type="subcellular location">
    <subcellularLocation>
        <location evidence="3">Secreted</location>
    </subcellularLocation>
</comment>
<comment type="similarity">
    <text evidence="3">Belongs to the cysteine-rich repeat secretory protein family.</text>
</comment>
<comment type="sequence caution" evidence="3">
    <conflict type="erroneous gene model prediction">
        <sequence resource="EMBL-CDS" id="CAB45823"/>
    </conflict>
</comment>
<comment type="sequence caution" evidence="3">
    <conflict type="erroneous gene model prediction">
        <sequence resource="EMBL-CDS" id="CAB79057"/>
    </conflict>
</comment>
<proteinExistence type="inferred from homology"/>
<evidence type="ECO:0000255" key="1"/>
<evidence type="ECO:0000255" key="2">
    <source>
        <dbReference type="PROSITE-ProRule" id="PRU00806"/>
    </source>
</evidence>
<evidence type="ECO:0000305" key="3"/>
<protein>
    <recommendedName>
        <fullName>Cysteine-rich repeat secretory protein 50</fullName>
    </recommendedName>
</protein>